<comment type="function">
    <text evidence="1">NAD-binding protein involved in the addition of a carboxymethylaminomethyl (cmnm) group at the wobble position (U34) of certain tRNAs, forming tRNA-cmnm(5)s(2)U34.</text>
</comment>
<comment type="cofactor">
    <cofactor evidence="1">
        <name>FAD</name>
        <dbReference type="ChEBI" id="CHEBI:57692"/>
    </cofactor>
</comment>
<comment type="subunit">
    <text evidence="1">Homodimer. Heterotetramer of two MnmE and two MnmG subunits.</text>
</comment>
<comment type="subcellular location">
    <subcellularLocation>
        <location evidence="1">Cytoplasm</location>
    </subcellularLocation>
</comment>
<comment type="similarity">
    <text evidence="1">Belongs to the MnmG family.</text>
</comment>
<keyword id="KW-0963">Cytoplasm</keyword>
<keyword id="KW-0274">FAD</keyword>
<keyword id="KW-0285">Flavoprotein</keyword>
<keyword id="KW-0520">NAD</keyword>
<keyword id="KW-0819">tRNA processing</keyword>
<accession>A5IKF8</accession>
<protein>
    <recommendedName>
        <fullName evidence="1">tRNA uridine 5-carboxymethylaminomethyl modification enzyme MnmG</fullName>
    </recommendedName>
    <alternativeName>
        <fullName evidence="1">Glucose-inhibited division protein A</fullName>
    </alternativeName>
</protein>
<reference key="1">
    <citation type="submission" date="2007-05" db="EMBL/GenBank/DDBJ databases">
        <title>Complete sequence of Thermotoga petrophila RKU-1.</title>
        <authorList>
            <consortium name="US DOE Joint Genome Institute"/>
            <person name="Copeland A."/>
            <person name="Lucas S."/>
            <person name="Lapidus A."/>
            <person name="Barry K."/>
            <person name="Glavina del Rio T."/>
            <person name="Dalin E."/>
            <person name="Tice H."/>
            <person name="Pitluck S."/>
            <person name="Sims D."/>
            <person name="Brettin T."/>
            <person name="Bruce D."/>
            <person name="Detter J.C."/>
            <person name="Han C."/>
            <person name="Tapia R."/>
            <person name="Schmutz J."/>
            <person name="Larimer F."/>
            <person name="Land M."/>
            <person name="Hauser L."/>
            <person name="Kyrpides N."/>
            <person name="Mikhailova N."/>
            <person name="Nelson K."/>
            <person name="Gogarten J.P."/>
            <person name="Noll K."/>
            <person name="Richardson P."/>
        </authorList>
    </citation>
    <scope>NUCLEOTIDE SEQUENCE [LARGE SCALE GENOMIC DNA]</scope>
    <source>
        <strain>ATCC BAA-488 / DSM 13995 / JCM 10881 / RKU-1</strain>
    </source>
</reference>
<feature type="chain" id="PRO_0000345353" description="tRNA uridine 5-carboxymethylaminomethyl modification enzyme MnmG">
    <location>
        <begin position="1"/>
        <end position="626"/>
    </location>
</feature>
<feature type="binding site" evidence="1">
    <location>
        <begin position="15"/>
        <end position="20"/>
    </location>
    <ligand>
        <name>FAD</name>
        <dbReference type="ChEBI" id="CHEBI:57692"/>
    </ligand>
</feature>
<feature type="binding site" evidence="1">
    <location>
        <begin position="277"/>
        <end position="291"/>
    </location>
    <ligand>
        <name>NAD(+)</name>
        <dbReference type="ChEBI" id="CHEBI:57540"/>
    </ligand>
</feature>
<evidence type="ECO:0000255" key="1">
    <source>
        <dbReference type="HAMAP-Rule" id="MF_00129"/>
    </source>
</evidence>
<gene>
    <name evidence="1" type="primary">mnmG</name>
    <name evidence="1" type="synonym">gidA</name>
    <name type="ordered locus">Tpet_0661</name>
</gene>
<dbReference type="EMBL" id="CP000702">
    <property type="protein sequence ID" value="ABQ46681.1"/>
    <property type="molecule type" value="Genomic_DNA"/>
</dbReference>
<dbReference type="RefSeq" id="WP_011943271.1">
    <property type="nucleotide sequence ID" value="NC_009486.1"/>
</dbReference>
<dbReference type="SMR" id="A5IKF8"/>
<dbReference type="STRING" id="390874.Tpet_0661"/>
<dbReference type="KEGG" id="tpt:Tpet_0661"/>
<dbReference type="eggNOG" id="COG0445">
    <property type="taxonomic scope" value="Bacteria"/>
</dbReference>
<dbReference type="HOGENOM" id="CLU_007831_2_2_0"/>
<dbReference type="Proteomes" id="UP000006558">
    <property type="component" value="Chromosome"/>
</dbReference>
<dbReference type="GO" id="GO:0005829">
    <property type="term" value="C:cytosol"/>
    <property type="evidence" value="ECO:0007669"/>
    <property type="project" value="TreeGrafter"/>
</dbReference>
<dbReference type="GO" id="GO:0050660">
    <property type="term" value="F:flavin adenine dinucleotide binding"/>
    <property type="evidence" value="ECO:0007669"/>
    <property type="project" value="UniProtKB-UniRule"/>
</dbReference>
<dbReference type="GO" id="GO:0030488">
    <property type="term" value="P:tRNA methylation"/>
    <property type="evidence" value="ECO:0007669"/>
    <property type="project" value="TreeGrafter"/>
</dbReference>
<dbReference type="GO" id="GO:0002098">
    <property type="term" value="P:tRNA wobble uridine modification"/>
    <property type="evidence" value="ECO:0007669"/>
    <property type="project" value="InterPro"/>
</dbReference>
<dbReference type="FunFam" id="1.10.10.1800:FF:000001">
    <property type="entry name" value="tRNA uridine 5-carboxymethylaminomethyl modification enzyme MnmG"/>
    <property type="match status" value="1"/>
</dbReference>
<dbReference type="FunFam" id="1.10.150.570:FF:000001">
    <property type="entry name" value="tRNA uridine 5-carboxymethylaminomethyl modification enzyme MnmG"/>
    <property type="match status" value="1"/>
</dbReference>
<dbReference type="FunFam" id="3.50.50.60:FF:000002">
    <property type="entry name" value="tRNA uridine 5-carboxymethylaminomethyl modification enzyme MnmG"/>
    <property type="match status" value="1"/>
</dbReference>
<dbReference type="FunFam" id="3.50.50.60:FF:000119">
    <property type="entry name" value="tRNA uridine 5-carboxymethylaminomethyl modification enzyme MnmG"/>
    <property type="match status" value="1"/>
</dbReference>
<dbReference type="Gene3D" id="3.50.50.60">
    <property type="entry name" value="FAD/NAD(P)-binding domain"/>
    <property type="match status" value="2"/>
</dbReference>
<dbReference type="Gene3D" id="1.10.150.570">
    <property type="entry name" value="GidA associated domain, C-terminal subdomain"/>
    <property type="match status" value="1"/>
</dbReference>
<dbReference type="Gene3D" id="1.10.10.1800">
    <property type="entry name" value="tRNA uridine 5-carboxymethylaminomethyl modification enzyme MnmG/GidA"/>
    <property type="match status" value="1"/>
</dbReference>
<dbReference type="HAMAP" id="MF_00129">
    <property type="entry name" value="MnmG_GidA"/>
    <property type="match status" value="1"/>
</dbReference>
<dbReference type="InterPro" id="IPR036188">
    <property type="entry name" value="FAD/NAD-bd_sf"/>
</dbReference>
<dbReference type="InterPro" id="IPR049312">
    <property type="entry name" value="GIDA_C_N"/>
</dbReference>
<dbReference type="InterPro" id="IPR004416">
    <property type="entry name" value="MnmG"/>
</dbReference>
<dbReference type="InterPro" id="IPR002218">
    <property type="entry name" value="MnmG-rel"/>
</dbReference>
<dbReference type="InterPro" id="IPR020595">
    <property type="entry name" value="MnmG-rel_CS"/>
</dbReference>
<dbReference type="InterPro" id="IPR026904">
    <property type="entry name" value="MnmG_C"/>
</dbReference>
<dbReference type="InterPro" id="IPR047001">
    <property type="entry name" value="MnmG_C_subdom"/>
</dbReference>
<dbReference type="InterPro" id="IPR044920">
    <property type="entry name" value="MnmG_C_subdom_sf"/>
</dbReference>
<dbReference type="InterPro" id="IPR040131">
    <property type="entry name" value="MnmG_N"/>
</dbReference>
<dbReference type="NCBIfam" id="TIGR00136">
    <property type="entry name" value="mnmG_gidA"/>
    <property type="match status" value="1"/>
</dbReference>
<dbReference type="PANTHER" id="PTHR11806">
    <property type="entry name" value="GLUCOSE INHIBITED DIVISION PROTEIN A"/>
    <property type="match status" value="1"/>
</dbReference>
<dbReference type="PANTHER" id="PTHR11806:SF0">
    <property type="entry name" value="PROTEIN MTO1 HOMOLOG, MITOCHONDRIAL"/>
    <property type="match status" value="1"/>
</dbReference>
<dbReference type="Pfam" id="PF01134">
    <property type="entry name" value="GIDA"/>
    <property type="match status" value="1"/>
</dbReference>
<dbReference type="Pfam" id="PF21680">
    <property type="entry name" value="GIDA_C_1st"/>
    <property type="match status" value="1"/>
</dbReference>
<dbReference type="Pfam" id="PF13932">
    <property type="entry name" value="SAM_GIDA_C"/>
    <property type="match status" value="1"/>
</dbReference>
<dbReference type="PRINTS" id="PR00411">
    <property type="entry name" value="PNDRDTASEI"/>
</dbReference>
<dbReference type="SMART" id="SM01228">
    <property type="entry name" value="GIDA_assoc_3"/>
    <property type="match status" value="1"/>
</dbReference>
<dbReference type="SUPFAM" id="SSF51905">
    <property type="entry name" value="FAD/NAD(P)-binding domain"/>
    <property type="match status" value="1"/>
</dbReference>
<dbReference type="PROSITE" id="PS01280">
    <property type="entry name" value="GIDA_1"/>
    <property type="match status" value="1"/>
</dbReference>
<dbReference type="PROSITE" id="PS01281">
    <property type="entry name" value="GIDA_2"/>
    <property type="match status" value="1"/>
</dbReference>
<proteinExistence type="inferred from homology"/>
<organism>
    <name type="scientific">Thermotoga petrophila (strain ATCC BAA-488 / DSM 13995 / JCM 10881 / RKU-1)</name>
    <dbReference type="NCBI Taxonomy" id="390874"/>
    <lineage>
        <taxon>Bacteria</taxon>
        <taxon>Thermotogati</taxon>
        <taxon>Thermotogota</taxon>
        <taxon>Thermotogae</taxon>
        <taxon>Thermotogales</taxon>
        <taxon>Thermotogaceae</taxon>
        <taxon>Thermotoga</taxon>
    </lineage>
</organism>
<name>MNMG_THEP1</name>
<sequence>MRPEDDRVYDVIVVGAGHAGIEAALAAARMGFRVLVLAVNPDTVGWAPCNPAIGGPAKGVVVREIDALGGEMAKTTDETMINIRMLNVSKGPAVRALRAQIDKILYSRTMKRKLETNPNIVLRHGIVEKILTEKGKVKGVVDNYGIDYLGKAVIVTTGTFLRGKIFIGRSTFPAGRMGEFPATKLTESLIELGFEVGRFKTGTPARVLKRSINFSVMERQDTSDEPLAFSFFDEPRVLPKDYPCWLTRTNPETHSIIRQYLEFSPLYGTVKLIEGVGPRYCPSIEDKVVKFKDKESHQVFVEPEGRDTEEYYLNGLSTSLPYEAQIKMIRSVKGLENAIITRPAYAIEYDYIDPRQLYPTLESKLVENLYFAGQVNGTSGYEEAAGQGIIAGINAALKLRGESPLILKRSEAYIGVLIDDLVTRGVDEPYRLLTSRAEYRLLLRHDNAHLRLAKYGYRVGLIPKWFYEKVLSLERRINEEIERLKKVAVKPSDRINDLLTSLGTSPLKESVSLYHLLKRPQLSYSTLKFLDPNPMDDPEVVEQVEINVKYEGYIQKMFEEVAVFEKYENYEVPYDLDYDAVPNLSTEAKDKLKKIRPRSIGQAMRIPGINPSDISNLIIYLDKKKQ</sequence>